<dbReference type="EC" id="2.7.7.6" evidence="1"/>
<dbReference type="EMBL" id="CP000124">
    <property type="protein sequence ID" value="ABA47571.1"/>
    <property type="molecule type" value="Genomic_DNA"/>
</dbReference>
<dbReference type="RefSeq" id="WP_004198365.1">
    <property type="nucleotide sequence ID" value="NC_007434.1"/>
</dbReference>
<dbReference type="SMR" id="Q3JMQ3"/>
<dbReference type="EnsemblBacteria" id="ABA47571">
    <property type="protein sequence ID" value="ABA47571"/>
    <property type="gene ID" value="BURPS1710b_3786"/>
</dbReference>
<dbReference type="GeneID" id="92980328"/>
<dbReference type="KEGG" id="bpm:BURPS1710b_3786"/>
<dbReference type="HOGENOM" id="CLU_000524_4_3_4"/>
<dbReference type="Proteomes" id="UP000002700">
    <property type="component" value="Chromosome I"/>
</dbReference>
<dbReference type="GO" id="GO:0000428">
    <property type="term" value="C:DNA-directed RNA polymerase complex"/>
    <property type="evidence" value="ECO:0007669"/>
    <property type="project" value="UniProtKB-KW"/>
</dbReference>
<dbReference type="GO" id="GO:0003677">
    <property type="term" value="F:DNA binding"/>
    <property type="evidence" value="ECO:0007669"/>
    <property type="project" value="UniProtKB-UniRule"/>
</dbReference>
<dbReference type="GO" id="GO:0003899">
    <property type="term" value="F:DNA-directed RNA polymerase activity"/>
    <property type="evidence" value="ECO:0007669"/>
    <property type="project" value="UniProtKB-UniRule"/>
</dbReference>
<dbReference type="GO" id="GO:0032549">
    <property type="term" value="F:ribonucleoside binding"/>
    <property type="evidence" value="ECO:0007669"/>
    <property type="project" value="InterPro"/>
</dbReference>
<dbReference type="GO" id="GO:0006351">
    <property type="term" value="P:DNA-templated transcription"/>
    <property type="evidence" value="ECO:0007669"/>
    <property type="project" value="UniProtKB-UniRule"/>
</dbReference>
<dbReference type="CDD" id="cd00653">
    <property type="entry name" value="RNA_pol_B_RPB2"/>
    <property type="match status" value="1"/>
</dbReference>
<dbReference type="FunFam" id="2.40.50.100:FF:000006">
    <property type="entry name" value="DNA-directed RNA polymerase subunit beta"/>
    <property type="match status" value="1"/>
</dbReference>
<dbReference type="FunFam" id="2.40.50.150:FF:000001">
    <property type="entry name" value="DNA-directed RNA polymerase subunit beta"/>
    <property type="match status" value="1"/>
</dbReference>
<dbReference type="FunFam" id="3.90.1110.10:FF:000004">
    <property type="entry name" value="DNA-directed RNA polymerase subunit beta"/>
    <property type="match status" value="1"/>
</dbReference>
<dbReference type="FunFam" id="3.90.1800.10:FF:000001">
    <property type="entry name" value="DNA-directed RNA polymerase subunit beta"/>
    <property type="match status" value="1"/>
</dbReference>
<dbReference type="Gene3D" id="2.40.50.100">
    <property type="match status" value="1"/>
</dbReference>
<dbReference type="Gene3D" id="2.40.50.150">
    <property type="match status" value="1"/>
</dbReference>
<dbReference type="Gene3D" id="3.90.1100.10">
    <property type="match status" value="2"/>
</dbReference>
<dbReference type="Gene3D" id="2.30.150.10">
    <property type="entry name" value="DNA-directed RNA polymerase, beta subunit, external 1 domain"/>
    <property type="match status" value="1"/>
</dbReference>
<dbReference type="Gene3D" id="2.40.270.10">
    <property type="entry name" value="DNA-directed RNA polymerase, subunit 2, domain 6"/>
    <property type="match status" value="2"/>
</dbReference>
<dbReference type="Gene3D" id="3.90.1800.10">
    <property type="entry name" value="RNA polymerase alpha subunit dimerisation domain"/>
    <property type="match status" value="1"/>
</dbReference>
<dbReference type="Gene3D" id="3.90.1110.10">
    <property type="entry name" value="RNA polymerase Rpb2, domain 2"/>
    <property type="match status" value="2"/>
</dbReference>
<dbReference type="HAMAP" id="MF_01321">
    <property type="entry name" value="RNApol_bact_RpoB"/>
    <property type="match status" value="1"/>
</dbReference>
<dbReference type="InterPro" id="IPR042107">
    <property type="entry name" value="DNA-dir_RNA_pol_bsu_ext_1_sf"/>
</dbReference>
<dbReference type="InterPro" id="IPR019462">
    <property type="entry name" value="DNA-dir_RNA_pol_bsu_external_1"/>
</dbReference>
<dbReference type="InterPro" id="IPR015712">
    <property type="entry name" value="DNA-dir_RNA_pol_su2"/>
</dbReference>
<dbReference type="InterPro" id="IPR007120">
    <property type="entry name" value="DNA-dir_RNAP_su2_dom"/>
</dbReference>
<dbReference type="InterPro" id="IPR037033">
    <property type="entry name" value="DNA-dir_RNAP_su2_hyb_sf"/>
</dbReference>
<dbReference type="InterPro" id="IPR010243">
    <property type="entry name" value="RNA_pol_bsu_bac"/>
</dbReference>
<dbReference type="InterPro" id="IPR007121">
    <property type="entry name" value="RNA_pol_bsu_CS"/>
</dbReference>
<dbReference type="InterPro" id="IPR007644">
    <property type="entry name" value="RNA_pol_bsu_protrusion"/>
</dbReference>
<dbReference type="InterPro" id="IPR007642">
    <property type="entry name" value="RNA_pol_Rpb2_2"/>
</dbReference>
<dbReference type="InterPro" id="IPR037034">
    <property type="entry name" value="RNA_pol_Rpb2_2_sf"/>
</dbReference>
<dbReference type="InterPro" id="IPR007645">
    <property type="entry name" value="RNA_pol_Rpb2_3"/>
</dbReference>
<dbReference type="InterPro" id="IPR007641">
    <property type="entry name" value="RNA_pol_Rpb2_7"/>
</dbReference>
<dbReference type="InterPro" id="IPR014724">
    <property type="entry name" value="RNA_pol_RPB2_OB-fold"/>
</dbReference>
<dbReference type="NCBIfam" id="NF001616">
    <property type="entry name" value="PRK00405.1"/>
    <property type="match status" value="1"/>
</dbReference>
<dbReference type="NCBIfam" id="TIGR02013">
    <property type="entry name" value="rpoB"/>
    <property type="match status" value="1"/>
</dbReference>
<dbReference type="PANTHER" id="PTHR20856">
    <property type="entry name" value="DNA-DIRECTED RNA POLYMERASE I SUBUNIT 2"/>
    <property type="match status" value="1"/>
</dbReference>
<dbReference type="Pfam" id="PF04563">
    <property type="entry name" value="RNA_pol_Rpb2_1"/>
    <property type="match status" value="1"/>
</dbReference>
<dbReference type="Pfam" id="PF04561">
    <property type="entry name" value="RNA_pol_Rpb2_2"/>
    <property type="match status" value="2"/>
</dbReference>
<dbReference type="Pfam" id="PF04565">
    <property type="entry name" value="RNA_pol_Rpb2_3"/>
    <property type="match status" value="1"/>
</dbReference>
<dbReference type="Pfam" id="PF10385">
    <property type="entry name" value="RNA_pol_Rpb2_45"/>
    <property type="match status" value="1"/>
</dbReference>
<dbReference type="Pfam" id="PF00562">
    <property type="entry name" value="RNA_pol_Rpb2_6"/>
    <property type="match status" value="1"/>
</dbReference>
<dbReference type="Pfam" id="PF04560">
    <property type="entry name" value="RNA_pol_Rpb2_7"/>
    <property type="match status" value="1"/>
</dbReference>
<dbReference type="SUPFAM" id="SSF64484">
    <property type="entry name" value="beta and beta-prime subunits of DNA dependent RNA-polymerase"/>
    <property type="match status" value="1"/>
</dbReference>
<dbReference type="PROSITE" id="PS01166">
    <property type="entry name" value="RNA_POL_BETA"/>
    <property type="match status" value="1"/>
</dbReference>
<keyword id="KW-0240">DNA-directed RNA polymerase</keyword>
<keyword id="KW-0548">Nucleotidyltransferase</keyword>
<keyword id="KW-0804">Transcription</keyword>
<keyword id="KW-0808">Transferase</keyword>
<name>RPOB_BURP1</name>
<protein>
    <recommendedName>
        <fullName evidence="1">DNA-directed RNA polymerase subunit beta</fullName>
        <shortName evidence="1">RNAP subunit beta</shortName>
        <ecNumber evidence="1">2.7.7.6</ecNumber>
    </recommendedName>
    <alternativeName>
        <fullName evidence="1">RNA polymerase subunit beta</fullName>
    </alternativeName>
    <alternativeName>
        <fullName evidence="1">Transcriptase subunit beta</fullName>
    </alternativeName>
</protein>
<gene>
    <name evidence="1" type="primary">rpoB</name>
    <name type="ordered locus">BURPS1710b_3786</name>
</gene>
<feature type="chain" id="PRO_0000224039" description="DNA-directed RNA polymerase subunit beta">
    <location>
        <begin position="1"/>
        <end position="1368"/>
    </location>
</feature>
<sequence>MQYSFTEKKRIRKSFAKRSIVHQVPFLLATQLESFSTFLQADVPTAQRKSEGLQAAFTSVFPIVSHNGFARLEFVSYALSSPAFNIKECQQRGLTYCSALRAKVRLVLLDKESPSKPVVKEVKEQEVYMGEIPLMTPTGSFVINGTERVIVSQLHRSPGVFFEHDKGKTHSSGKLLFSARIIPYRGSWLDFEFDPKDVLYFRVDRRRKMPVTILLKAIGLTPEQILANFFVFDNFTLMDEGAQMEFVPERLRGEVARFDITDREGKVIVQKDKRINAKHIRDLEAAKTKYISVPEDYLLGRVLAKNVVDGDTGEVIANANDEITEGVLEKLREAKIKEIQTLYTNDLDQGPYISSTLRVDETVDKTAARIAIYRMMRPGEPPTEEAVEALFNRLFYSEDAYDLSKVGRMKFNRRVGRDEITGPMTLQDDDILATIKILVELRNGKGEVDDIDHLGNRRVRCVGELAENQFRAGLVRVERAVKERLGQAESENLMPHDLINSKPISSAIREFFGSSQLSQFMDQTNPLSEITHKRRVSALGPGGLTRERAGFEVRDVHPTHYGRVCPIETPEGPNIGLINSLALYAHLNEYGFLETPYRKVVDSKVTDQIDYLSAIEEGRYMIAQANAAIGDDGALVDELVSSREAGETMMVTPDRIQYMDVAPSQIVSVAASLIPFLEHDDANRALMGSNMQRQAVPCLRPEKPVVGTGIERTVAVDSGTTVQALRGGVVDYVDAGRIVIRVNDDEAVAGEVGVDIYNLIKYTRSNQNTNINQRPIVKMGDKVSRGDVLADGASTDLGELALGQNMLIAFMPWNGYNFEDSILISERVVADDRYTSIHIEELNVVARDTKLGPEEITRDISNLAEVQLGRLDESGIVYIGAEVEAGDVLVGKVTPKGETQLTPEEKLLRAIFGEKASDVKDTSLRVPSGMSGTVIDVQVFTREGIQRDKRAQQIIDDELKRYRLDLNDQLRIVEGDAFQRLARMLVGKVANGGPKKLAKGTKIDQAYLEDLDHYHWFDIRLADDEAAVQLEAIKNSIEEKRHQFDLAFEEKRKKLTQGDELPPGVLKMVKVYLAVKRRLQPGDKMAGRHGNKGVVSKIVPVEDMPYMADGRPADVVLNPLGVPSRMNVGQVLEVHLGWAAKGLGWRIGEMLARQTKIEELRVFLTKIYNESGRAEDLESFSDDEILELAKNLREGVPFATPVFDGATEEEMSKMLDLAFPDDIAEQLDMNPSKNQVRLYDGRTGEPFERRVTVGYMHYLKLHHLVDDKMHARSTGPYSLVTQQPLGGKAQFGGQRFGEMEVWALEAYGASYVLQEMLTVKSDDVTGRTKVYENLVKGDHVIDAGMPESFNVLVKEIRSLGIDIDLDRN</sequence>
<reference key="1">
    <citation type="journal article" date="2010" name="Genome Biol. Evol.">
        <title>Continuing evolution of Burkholderia mallei through genome reduction and large-scale rearrangements.</title>
        <authorList>
            <person name="Losada L."/>
            <person name="Ronning C.M."/>
            <person name="DeShazer D."/>
            <person name="Woods D."/>
            <person name="Fedorova N."/>
            <person name="Kim H.S."/>
            <person name="Shabalina S.A."/>
            <person name="Pearson T.R."/>
            <person name="Brinkac L."/>
            <person name="Tan P."/>
            <person name="Nandi T."/>
            <person name="Crabtree J."/>
            <person name="Badger J."/>
            <person name="Beckstrom-Sternberg S."/>
            <person name="Saqib M."/>
            <person name="Schutzer S.E."/>
            <person name="Keim P."/>
            <person name="Nierman W.C."/>
        </authorList>
    </citation>
    <scope>NUCLEOTIDE SEQUENCE [LARGE SCALE GENOMIC DNA]</scope>
    <source>
        <strain>1710b</strain>
    </source>
</reference>
<organism>
    <name type="scientific">Burkholderia pseudomallei (strain 1710b)</name>
    <dbReference type="NCBI Taxonomy" id="320372"/>
    <lineage>
        <taxon>Bacteria</taxon>
        <taxon>Pseudomonadati</taxon>
        <taxon>Pseudomonadota</taxon>
        <taxon>Betaproteobacteria</taxon>
        <taxon>Burkholderiales</taxon>
        <taxon>Burkholderiaceae</taxon>
        <taxon>Burkholderia</taxon>
        <taxon>pseudomallei group</taxon>
    </lineage>
</organism>
<evidence type="ECO:0000255" key="1">
    <source>
        <dbReference type="HAMAP-Rule" id="MF_01321"/>
    </source>
</evidence>
<proteinExistence type="inferred from homology"/>
<accession>Q3JMQ3</accession>
<comment type="function">
    <text evidence="1">DNA-dependent RNA polymerase catalyzes the transcription of DNA into RNA using the four ribonucleoside triphosphates as substrates.</text>
</comment>
<comment type="catalytic activity">
    <reaction evidence="1">
        <text>RNA(n) + a ribonucleoside 5'-triphosphate = RNA(n+1) + diphosphate</text>
        <dbReference type="Rhea" id="RHEA:21248"/>
        <dbReference type="Rhea" id="RHEA-COMP:14527"/>
        <dbReference type="Rhea" id="RHEA-COMP:17342"/>
        <dbReference type="ChEBI" id="CHEBI:33019"/>
        <dbReference type="ChEBI" id="CHEBI:61557"/>
        <dbReference type="ChEBI" id="CHEBI:140395"/>
        <dbReference type="EC" id="2.7.7.6"/>
    </reaction>
</comment>
<comment type="subunit">
    <text evidence="1">The RNAP catalytic core consists of 2 alpha, 1 beta, 1 beta' and 1 omega subunit. When a sigma factor is associated with the core the holoenzyme is formed, which can initiate transcription.</text>
</comment>
<comment type="similarity">
    <text evidence="1">Belongs to the RNA polymerase beta chain family.</text>
</comment>